<reference key="1">
    <citation type="journal article" date="2010" name="J. Bacteriol.">
        <title>Complete genome sequence of Beijerinckia indica subsp. indica.</title>
        <authorList>
            <person name="Tamas I."/>
            <person name="Dedysh S.N."/>
            <person name="Liesack W."/>
            <person name="Stott M.B."/>
            <person name="Alam M."/>
            <person name="Murrell J.C."/>
            <person name="Dunfield P.F."/>
        </authorList>
    </citation>
    <scope>NUCLEOTIDE SEQUENCE [LARGE SCALE GENOMIC DNA]</scope>
    <source>
        <strain>ATCC 9039 / DSM 1715 / NCIMB 8712</strain>
    </source>
</reference>
<gene>
    <name evidence="1" type="primary">miaA</name>
    <name type="ordered locus">Bind_2853</name>
</gene>
<comment type="function">
    <text evidence="1">Catalyzes the transfer of a dimethylallyl group onto the adenine at position 37 in tRNAs that read codons beginning with uridine, leading to the formation of N6-(dimethylallyl)adenosine (i(6)A).</text>
</comment>
<comment type="catalytic activity">
    <reaction evidence="1">
        <text>adenosine(37) in tRNA + dimethylallyl diphosphate = N(6)-dimethylallyladenosine(37) in tRNA + diphosphate</text>
        <dbReference type="Rhea" id="RHEA:26482"/>
        <dbReference type="Rhea" id="RHEA-COMP:10162"/>
        <dbReference type="Rhea" id="RHEA-COMP:10375"/>
        <dbReference type="ChEBI" id="CHEBI:33019"/>
        <dbReference type="ChEBI" id="CHEBI:57623"/>
        <dbReference type="ChEBI" id="CHEBI:74411"/>
        <dbReference type="ChEBI" id="CHEBI:74415"/>
        <dbReference type="EC" id="2.5.1.75"/>
    </reaction>
</comment>
<comment type="cofactor">
    <cofactor evidence="1">
        <name>Mg(2+)</name>
        <dbReference type="ChEBI" id="CHEBI:18420"/>
    </cofactor>
</comment>
<comment type="subunit">
    <text evidence="1">Monomer.</text>
</comment>
<comment type="similarity">
    <text evidence="1">Belongs to the IPP transferase family.</text>
</comment>
<keyword id="KW-0067">ATP-binding</keyword>
<keyword id="KW-0460">Magnesium</keyword>
<keyword id="KW-0547">Nucleotide-binding</keyword>
<keyword id="KW-1185">Reference proteome</keyword>
<keyword id="KW-0808">Transferase</keyword>
<keyword id="KW-0819">tRNA processing</keyword>
<feature type="chain" id="PRO_0000377084" description="tRNA dimethylallyltransferase">
    <location>
        <begin position="1"/>
        <end position="302"/>
    </location>
</feature>
<feature type="region of interest" description="Interaction with substrate tRNA" evidence="1">
    <location>
        <begin position="32"/>
        <end position="35"/>
    </location>
</feature>
<feature type="region of interest" description="Interaction with substrate tRNA" evidence="1">
    <location>
        <begin position="156"/>
        <end position="160"/>
    </location>
</feature>
<feature type="binding site" evidence="1">
    <location>
        <begin position="7"/>
        <end position="14"/>
    </location>
    <ligand>
        <name>ATP</name>
        <dbReference type="ChEBI" id="CHEBI:30616"/>
    </ligand>
</feature>
<feature type="binding site" evidence="1">
    <location>
        <begin position="9"/>
        <end position="14"/>
    </location>
    <ligand>
        <name>substrate</name>
    </ligand>
</feature>
<feature type="site" description="Interaction with substrate tRNA" evidence="1">
    <location>
        <position position="98"/>
    </location>
</feature>
<feature type="site" description="Interaction with substrate tRNA" evidence="1">
    <location>
        <position position="120"/>
    </location>
</feature>
<dbReference type="EC" id="2.5.1.75" evidence="1"/>
<dbReference type="EMBL" id="CP001016">
    <property type="protein sequence ID" value="ACB96422.1"/>
    <property type="molecule type" value="Genomic_DNA"/>
</dbReference>
<dbReference type="SMR" id="B2IKE2"/>
<dbReference type="STRING" id="395963.Bind_2853"/>
<dbReference type="KEGG" id="bid:Bind_2853"/>
<dbReference type="eggNOG" id="COG0324">
    <property type="taxonomic scope" value="Bacteria"/>
</dbReference>
<dbReference type="HOGENOM" id="CLU_032616_0_1_5"/>
<dbReference type="OrthoDB" id="9776390at2"/>
<dbReference type="Proteomes" id="UP000001695">
    <property type="component" value="Chromosome"/>
</dbReference>
<dbReference type="GO" id="GO:0005524">
    <property type="term" value="F:ATP binding"/>
    <property type="evidence" value="ECO:0007669"/>
    <property type="project" value="UniProtKB-UniRule"/>
</dbReference>
<dbReference type="GO" id="GO:0052381">
    <property type="term" value="F:tRNA dimethylallyltransferase activity"/>
    <property type="evidence" value="ECO:0007669"/>
    <property type="project" value="UniProtKB-UniRule"/>
</dbReference>
<dbReference type="GO" id="GO:0006400">
    <property type="term" value="P:tRNA modification"/>
    <property type="evidence" value="ECO:0007669"/>
    <property type="project" value="TreeGrafter"/>
</dbReference>
<dbReference type="Gene3D" id="1.10.20.140">
    <property type="match status" value="1"/>
</dbReference>
<dbReference type="Gene3D" id="3.40.50.300">
    <property type="entry name" value="P-loop containing nucleotide triphosphate hydrolases"/>
    <property type="match status" value="1"/>
</dbReference>
<dbReference type="HAMAP" id="MF_00185">
    <property type="entry name" value="IPP_trans"/>
    <property type="match status" value="1"/>
</dbReference>
<dbReference type="InterPro" id="IPR039657">
    <property type="entry name" value="Dimethylallyltransferase"/>
</dbReference>
<dbReference type="InterPro" id="IPR018022">
    <property type="entry name" value="IPT"/>
</dbReference>
<dbReference type="InterPro" id="IPR027417">
    <property type="entry name" value="P-loop_NTPase"/>
</dbReference>
<dbReference type="NCBIfam" id="TIGR00174">
    <property type="entry name" value="miaA"/>
    <property type="match status" value="1"/>
</dbReference>
<dbReference type="PANTHER" id="PTHR11088">
    <property type="entry name" value="TRNA DIMETHYLALLYLTRANSFERASE"/>
    <property type="match status" value="1"/>
</dbReference>
<dbReference type="PANTHER" id="PTHR11088:SF60">
    <property type="entry name" value="TRNA DIMETHYLALLYLTRANSFERASE"/>
    <property type="match status" value="1"/>
</dbReference>
<dbReference type="Pfam" id="PF01715">
    <property type="entry name" value="IPPT"/>
    <property type="match status" value="1"/>
</dbReference>
<dbReference type="SUPFAM" id="SSF52540">
    <property type="entry name" value="P-loop containing nucleoside triphosphate hydrolases"/>
    <property type="match status" value="2"/>
</dbReference>
<organism>
    <name type="scientific">Beijerinckia indica subsp. indica (strain ATCC 9039 / DSM 1715 / NCIMB 8712)</name>
    <dbReference type="NCBI Taxonomy" id="395963"/>
    <lineage>
        <taxon>Bacteria</taxon>
        <taxon>Pseudomonadati</taxon>
        <taxon>Pseudomonadota</taxon>
        <taxon>Alphaproteobacteria</taxon>
        <taxon>Hyphomicrobiales</taxon>
        <taxon>Beijerinckiaceae</taxon>
        <taxon>Beijerinckia</taxon>
    </lineage>
</organism>
<sequence>MALLIAGPTASGKSALALRLAETCNGVVINTDSMQLYRDLHVLTARPTQEEEHQAPHVLFGSVDGRINYSVALWLDQARIALDEAQGQGRMPIFVGGTGLYFKALTQGLSDIPSVPDSIRADLRRHAEGCSTPELHRELAARDPEMAARLKPNDSQRILRALEVFVATGQSLAAFQNARSAPLLTMSEVLAVFLAPDRADLNRRIDRRFDTMLEQGALQEVERLGARGLDPSLPVMRAHGVPHLLRALRGEISLAEAADRGKLDTRHYAKRQFTFARHQLPDFAWRTPEEAETFFLSKLQRM</sequence>
<evidence type="ECO:0000255" key="1">
    <source>
        <dbReference type="HAMAP-Rule" id="MF_00185"/>
    </source>
</evidence>
<name>MIAA_BEII9</name>
<protein>
    <recommendedName>
        <fullName evidence="1">tRNA dimethylallyltransferase</fullName>
        <ecNumber evidence="1">2.5.1.75</ecNumber>
    </recommendedName>
    <alternativeName>
        <fullName evidence="1">Dimethylallyl diphosphate:tRNA dimethylallyltransferase</fullName>
        <shortName evidence="1">DMAPP:tRNA dimethylallyltransferase</shortName>
        <shortName evidence="1">DMATase</shortName>
    </alternativeName>
    <alternativeName>
        <fullName evidence="1">Isopentenyl-diphosphate:tRNA isopentenyltransferase</fullName>
        <shortName evidence="1">IPP transferase</shortName>
        <shortName evidence="1">IPPT</shortName>
        <shortName evidence="1">IPTase</shortName>
    </alternativeName>
</protein>
<proteinExistence type="inferred from homology"/>
<accession>B2IKE2</accession>